<geneLocation type="chloroplast"/>
<protein>
    <recommendedName>
        <fullName evidence="1">ATP-dependent Clp protease proteolytic subunit</fullName>
        <ecNumber evidence="1">3.4.21.92</ecNumber>
    </recommendedName>
    <alternativeName>
        <fullName evidence="1">Endopeptidase Clp</fullName>
    </alternativeName>
</protein>
<proteinExistence type="inferred from homology"/>
<feature type="chain" id="PRO_0000179759" description="ATP-dependent Clp protease proteolytic subunit">
    <location>
        <begin position="1"/>
        <end position="196"/>
    </location>
</feature>
<feature type="active site" description="Nucleophile" evidence="1">
    <location>
        <position position="101"/>
    </location>
</feature>
<feature type="active site" evidence="1">
    <location>
        <position position="126"/>
    </location>
</feature>
<dbReference type="EC" id="3.4.21.92" evidence="1"/>
<dbReference type="EMBL" id="AJ400848">
    <property type="protein sequence ID" value="CAB88752.1"/>
    <property type="molecule type" value="Genomic_DNA"/>
</dbReference>
<dbReference type="RefSeq" id="NP_054959.1">
    <property type="nucleotide sequence ID" value="NC_002202.1"/>
</dbReference>
<dbReference type="SMR" id="Q9M3K5"/>
<dbReference type="FunCoup" id="Q9M3K5">
    <property type="interactions" value="10"/>
</dbReference>
<dbReference type="STRING" id="3562.Q9M3K5"/>
<dbReference type="MEROPS" id="S14.002"/>
<dbReference type="GeneID" id="2715582"/>
<dbReference type="KEGG" id="soe:2715582"/>
<dbReference type="InParanoid" id="Q9M3K5"/>
<dbReference type="OrthoDB" id="1882605at2759"/>
<dbReference type="Proteomes" id="UP001155700">
    <property type="component" value="Chloroplast Pltd"/>
</dbReference>
<dbReference type="GO" id="GO:0009570">
    <property type="term" value="C:chloroplast stroma"/>
    <property type="evidence" value="ECO:0007669"/>
    <property type="project" value="UniProtKB-SubCell"/>
</dbReference>
<dbReference type="GO" id="GO:0009368">
    <property type="term" value="C:endopeptidase Clp complex"/>
    <property type="evidence" value="ECO:0000318"/>
    <property type="project" value="GO_Central"/>
</dbReference>
<dbReference type="GO" id="GO:0004176">
    <property type="term" value="F:ATP-dependent peptidase activity"/>
    <property type="evidence" value="ECO:0000318"/>
    <property type="project" value="GO_Central"/>
</dbReference>
<dbReference type="GO" id="GO:0051117">
    <property type="term" value="F:ATPase binding"/>
    <property type="evidence" value="ECO:0000318"/>
    <property type="project" value="GO_Central"/>
</dbReference>
<dbReference type="GO" id="GO:0004252">
    <property type="term" value="F:serine-type endopeptidase activity"/>
    <property type="evidence" value="ECO:0000318"/>
    <property type="project" value="GO_Central"/>
</dbReference>
<dbReference type="GO" id="GO:0006515">
    <property type="term" value="P:protein quality control for misfolded or incompletely synthesized proteins"/>
    <property type="evidence" value="ECO:0000318"/>
    <property type="project" value="GO_Central"/>
</dbReference>
<dbReference type="CDD" id="cd07017">
    <property type="entry name" value="S14_ClpP_2"/>
    <property type="match status" value="1"/>
</dbReference>
<dbReference type="FunFam" id="3.90.226.10:FF:000006">
    <property type="entry name" value="ATP-dependent Clp protease proteolytic subunit"/>
    <property type="match status" value="1"/>
</dbReference>
<dbReference type="Gene3D" id="3.90.226.10">
    <property type="entry name" value="2-enoyl-CoA Hydratase, Chain A, domain 1"/>
    <property type="match status" value="1"/>
</dbReference>
<dbReference type="HAMAP" id="MF_00444">
    <property type="entry name" value="ClpP"/>
    <property type="match status" value="1"/>
</dbReference>
<dbReference type="InterPro" id="IPR001907">
    <property type="entry name" value="ClpP"/>
</dbReference>
<dbReference type="InterPro" id="IPR029045">
    <property type="entry name" value="ClpP/crotonase-like_dom_sf"/>
</dbReference>
<dbReference type="InterPro" id="IPR023562">
    <property type="entry name" value="ClpP/TepA"/>
</dbReference>
<dbReference type="InterPro" id="IPR033135">
    <property type="entry name" value="ClpP_His_AS"/>
</dbReference>
<dbReference type="InterPro" id="IPR018215">
    <property type="entry name" value="ClpP_Ser_AS"/>
</dbReference>
<dbReference type="PANTHER" id="PTHR10381">
    <property type="entry name" value="ATP-DEPENDENT CLP PROTEASE PROTEOLYTIC SUBUNIT"/>
    <property type="match status" value="1"/>
</dbReference>
<dbReference type="PANTHER" id="PTHR10381:SF15">
    <property type="entry name" value="CHLOROPLASTIC ATP-DEPENDENT CLP PROTEASE PROTEOLYTIC SUBUNIT 1"/>
    <property type="match status" value="1"/>
</dbReference>
<dbReference type="Pfam" id="PF00574">
    <property type="entry name" value="CLP_protease"/>
    <property type="match status" value="1"/>
</dbReference>
<dbReference type="PRINTS" id="PR00127">
    <property type="entry name" value="CLPPROTEASEP"/>
</dbReference>
<dbReference type="SUPFAM" id="SSF52096">
    <property type="entry name" value="ClpP/crotonase"/>
    <property type="match status" value="1"/>
</dbReference>
<dbReference type="PROSITE" id="PS00382">
    <property type="entry name" value="CLP_PROTEASE_HIS"/>
    <property type="match status" value="1"/>
</dbReference>
<dbReference type="PROSITE" id="PS00381">
    <property type="entry name" value="CLP_PROTEASE_SER"/>
    <property type="match status" value="1"/>
</dbReference>
<sequence>MPIGVPKVPFRSPGEEDASWVDVYNRLYRERLLFLGQEVDSEISNQLIGLMVYLSIEDDTKDLYLFINSPGGWVIPGVAIYDTMQFVRPDVHTICMGLAASMGSFILVGGEITKRLAFPHARVMIHQPASSFYEAQTGEFLLEAEELLKLRETLTKVYGQRTGKPLWVVSEDMERDVFMSATEAQAHGIIDLVAVE</sequence>
<comment type="function">
    <text evidence="1">Cleaves peptides in various proteins in a process that requires ATP hydrolysis. Has a chymotrypsin-like activity. Plays a major role in the degradation of misfolded proteins.</text>
</comment>
<comment type="catalytic activity">
    <reaction evidence="1">
        <text>Hydrolysis of proteins to small peptides in the presence of ATP and magnesium. alpha-casein is the usual test substrate. In the absence of ATP, only oligopeptides shorter than five residues are hydrolyzed (such as succinyl-Leu-Tyr-|-NHMec, and Leu-Tyr-Leu-|-Tyr-Trp, in which cleavage of the -Tyr-|-Leu- and -Tyr-|-Trp bonds also occurs).</text>
        <dbReference type="EC" id="3.4.21.92"/>
    </reaction>
</comment>
<comment type="subunit">
    <text>Component of the chloroplastic Clp protease core complex.</text>
</comment>
<comment type="subcellular location">
    <subcellularLocation>
        <location evidence="1">Plastid</location>
        <location evidence="1">Chloroplast stroma</location>
    </subcellularLocation>
</comment>
<comment type="similarity">
    <text evidence="1">Belongs to the peptidase S14 family.</text>
</comment>
<keyword id="KW-0150">Chloroplast</keyword>
<keyword id="KW-0378">Hydrolase</keyword>
<keyword id="KW-0934">Plastid</keyword>
<keyword id="KW-0645">Protease</keyword>
<keyword id="KW-1185">Reference proteome</keyword>
<keyword id="KW-0720">Serine protease</keyword>
<name>CLPP_SPIOL</name>
<reference key="1">
    <citation type="journal article" date="2001" name="Plant Mol. Biol.">
        <title>The plastid chromosome of spinach (Spinacia oleracea): complete nucleotide sequence and gene organization.</title>
        <authorList>
            <person name="Schmitz-Linneweber C."/>
            <person name="Maier R.M."/>
            <person name="Alcaraz J.-P."/>
            <person name="Cottet A."/>
            <person name="Herrmann R.G."/>
            <person name="Mache R."/>
        </authorList>
    </citation>
    <scope>NUCLEOTIDE SEQUENCE [LARGE SCALE GENOMIC DNA]</scope>
    <source>
        <strain>cv. Geant d'hiver</strain>
        <strain>cv. Monatol</strain>
    </source>
</reference>
<accession>Q9M3K5</accession>
<evidence type="ECO:0000255" key="1">
    <source>
        <dbReference type="HAMAP-Rule" id="MF_00444"/>
    </source>
</evidence>
<gene>
    <name evidence="1" type="primary">clpP</name>
</gene>
<organism>
    <name type="scientific">Spinacia oleracea</name>
    <name type="common">Spinach</name>
    <dbReference type="NCBI Taxonomy" id="3562"/>
    <lineage>
        <taxon>Eukaryota</taxon>
        <taxon>Viridiplantae</taxon>
        <taxon>Streptophyta</taxon>
        <taxon>Embryophyta</taxon>
        <taxon>Tracheophyta</taxon>
        <taxon>Spermatophyta</taxon>
        <taxon>Magnoliopsida</taxon>
        <taxon>eudicotyledons</taxon>
        <taxon>Gunneridae</taxon>
        <taxon>Pentapetalae</taxon>
        <taxon>Caryophyllales</taxon>
        <taxon>Chenopodiaceae</taxon>
        <taxon>Chenopodioideae</taxon>
        <taxon>Anserineae</taxon>
        <taxon>Spinacia</taxon>
    </lineage>
</organism>